<feature type="chain" id="PRO_1000199823" description="Ribosomal RNA large subunit methyltransferase H">
    <location>
        <begin position="1"/>
        <end position="165"/>
    </location>
</feature>
<feature type="binding site" evidence="1">
    <location>
        <position position="109"/>
    </location>
    <ligand>
        <name>S-adenosyl-L-methionine</name>
        <dbReference type="ChEBI" id="CHEBI:59789"/>
    </ligand>
</feature>
<gene>
    <name evidence="1" type="primary">rlmH</name>
    <name type="ordered locus">Mchl_2564</name>
</gene>
<proteinExistence type="inferred from homology"/>
<protein>
    <recommendedName>
        <fullName evidence="1">Ribosomal RNA large subunit methyltransferase H</fullName>
        <ecNumber evidence="1">2.1.1.177</ecNumber>
    </recommendedName>
    <alternativeName>
        <fullName evidence="1">23S rRNA (pseudouridine1915-N3)-methyltransferase</fullName>
    </alternativeName>
    <alternativeName>
        <fullName evidence="1">23S rRNA m3Psi1915 methyltransferase</fullName>
    </alternativeName>
    <alternativeName>
        <fullName evidence="1">rRNA (pseudouridine-N3-)-methyltransferase RlmH</fullName>
    </alternativeName>
</protein>
<dbReference type="EC" id="2.1.1.177" evidence="1"/>
<dbReference type="EMBL" id="CP001298">
    <property type="protein sequence ID" value="ACK83406.1"/>
    <property type="molecule type" value="Genomic_DNA"/>
</dbReference>
<dbReference type="RefSeq" id="WP_003604480.1">
    <property type="nucleotide sequence ID" value="NC_011757.1"/>
</dbReference>
<dbReference type="SMR" id="B7L2C1"/>
<dbReference type="GeneID" id="72989975"/>
<dbReference type="KEGG" id="mch:Mchl_2564"/>
<dbReference type="HOGENOM" id="CLU_100552_1_1_5"/>
<dbReference type="Proteomes" id="UP000002385">
    <property type="component" value="Chromosome"/>
</dbReference>
<dbReference type="GO" id="GO:0005737">
    <property type="term" value="C:cytoplasm"/>
    <property type="evidence" value="ECO:0007669"/>
    <property type="project" value="UniProtKB-SubCell"/>
</dbReference>
<dbReference type="GO" id="GO:0070038">
    <property type="term" value="F:rRNA (pseudouridine-N3-)-methyltransferase activity"/>
    <property type="evidence" value="ECO:0007669"/>
    <property type="project" value="UniProtKB-UniRule"/>
</dbReference>
<dbReference type="CDD" id="cd18081">
    <property type="entry name" value="RlmH-like"/>
    <property type="match status" value="1"/>
</dbReference>
<dbReference type="Gene3D" id="3.40.1280.10">
    <property type="match status" value="1"/>
</dbReference>
<dbReference type="HAMAP" id="MF_00658">
    <property type="entry name" value="23SrRNA_methyltr_H"/>
    <property type="match status" value="1"/>
</dbReference>
<dbReference type="InterPro" id="IPR029028">
    <property type="entry name" value="Alpha/beta_knot_MTases"/>
</dbReference>
<dbReference type="InterPro" id="IPR003742">
    <property type="entry name" value="RlmH-like"/>
</dbReference>
<dbReference type="InterPro" id="IPR029026">
    <property type="entry name" value="tRNA_m1G_MTases_N"/>
</dbReference>
<dbReference type="NCBIfam" id="NF000989">
    <property type="entry name" value="PRK00103.2-3"/>
    <property type="match status" value="1"/>
</dbReference>
<dbReference type="NCBIfam" id="NF000991">
    <property type="entry name" value="PRK00103.2-5"/>
    <property type="match status" value="1"/>
</dbReference>
<dbReference type="PANTHER" id="PTHR33603">
    <property type="entry name" value="METHYLTRANSFERASE"/>
    <property type="match status" value="1"/>
</dbReference>
<dbReference type="PANTHER" id="PTHR33603:SF1">
    <property type="entry name" value="RIBOSOMAL RNA LARGE SUBUNIT METHYLTRANSFERASE H"/>
    <property type="match status" value="1"/>
</dbReference>
<dbReference type="Pfam" id="PF02590">
    <property type="entry name" value="SPOUT_MTase"/>
    <property type="match status" value="1"/>
</dbReference>
<dbReference type="PIRSF" id="PIRSF004505">
    <property type="entry name" value="MT_bac"/>
    <property type="match status" value="1"/>
</dbReference>
<dbReference type="SUPFAM" id="SSF75217">
    <property type="entry name" value="alpha/beta knot"/>
    <property type="match status" value="1"/>
</dbReference>
<sequence length="165" mass="17640">MRLLVVAIGRLKNGPERDLAARYRERAVALGKGLGVTACDLTEIPESRARRSADRIAEEAAAILALVPADAAVIACDERGRSDWPSERIADKIGAWRDAGRSTLVLVVGGADGLHETVRGRADHILAFGAATLPHGLVRVLALEQVYRALTILAGHPYHRGDPEA</sequence>
<name>RLMH_METC4</name>
<comment type="function">
    <text evidence="1">Specifically methylates the pseudouridine at position 1915 (m3Psi1915) in 23S rRNA.</text>
</comment>
<comment type="catalytic activity">
    <reaction evidence="1">
        <text>pseudouridine(1915) in 23S rRNA + S-adenosyl-L-methionine = N(3)-methylpseudouridine(1915) in 23S rRNA + S-adenosyl-L-homocysteine + H(+)</text>
        <dbReference type="Rhea" id="RHEA:42752"/>
        <dbReference type="Rhea" id="RHEA-COMP:10221"/>
        <dbReference type="Rhea" id="RHEA-COMP:10222"/>
        <dbReference type="ChEBI" id="CHEBI:15378"/>
        <dbReference type="ChEBI" id="CHEBI:57856"/>
        <dbReference type="ChEBI" id="CHEBI:59789"/>
        <dbReference type="ChEBI" id="CHEBI:65314"/>
        <dbReference type="ChEBI" id="CHEBI:74486"/>
        <dbReference type="EC" id="2.1.1.177"/>
    </reaction>
</comment>
<comment type="subunit">
    <text evidence="1">Homodimer.</text>
</comment>
<comment type="subcellular location">
    <subcellularLocation>
        <location evidence="1">Cytoplasm</location>
    </subcellularLocation>
</comment>
<comment type="similarity">
    <text evidence="1">Belongs to the RNA methyltransferase RlmH family.</text>
</comment>
<organism>
    <name type="scientific">Methylorubrum extorquens (strain CM4 / NCIMB 13688)</name>
    <name type="common">Methylobacterium extorquens</name>
    <dbReference type="NCBI Taxonomy" id="440085"/>
    <lineage>
        <taxon>Bacteria</taxon>
        <taxon>Pseudomonadati</taxon>
        <taxon>Pseudomonadota</taxon>
        <taxon>Alphaproteobacteria</taxon>
        <taxon>Hyphomicrobiales</taxon>
        <taxon>Methylobacteriaceae</taxon>
        <taxon>Methylorubrum</taxon>
    </lineage>
</organism>
<keyword id="KW-0963">Cytoplasm</keyword>
<keyword id="KW-0489">Methyltransferase</keyword>
<keyword id="KW-0698">rRNA processing</keyword>
<keyword id="KW-0949">S-adenosyl-L-methionine</keyword>
<keyword id="KW-0808">Transferase</keyword>
<accession>B7L2C1</accession>
<reference key="1">
    <citation type="submission" date="2008-12" db="EMBL/GenBank/DDBJ databases">
        <title>Complete sequence of chromosome of Methylobacterium chloromethanicum CM4.</title>
        <authorList>
            <consortium name="US DOE Joint Genome Institute"/>
            <person name="Lucas S."/>
            <person name="Copeland A."/>
            <person name="Lapidus A."/>
            <person name="Glavina del Rio T."/>
            <person name="Dalin E."/>
            <person name="Tice H."/>
            <person name="Bruce D."/>
            <person name="Goodwin L."/>
            <person name="Pitluck S."/>
            <person name="Chertkov O."/>
            <person name="Brettin T."/>
            <person name="Detter J.C."/>
            <person name="Han C."/>
            <person name="Larimer F."/>
            <person name="Land M."/>
            <person name="Hauser L."/>
            <person name="Kyrpides N."/>
            <person name="Mikhailova N."/>
            <person name="Marx C."/>
            <person name="Richardson P."/>
        </authorList>
    </citation>
    <scope>NUCLEOTIDE SEQUENCE [LARGE SCALE GENOMIC DNA]</scope>
    <source>
        <strain>CM4 / NCIMB 13688</strain>
    </source>
</reference>
<evidence type="ECO:0000255" key="1">
    <source>
        <dbReference type="HAMAP-Rule" id="MF_00658"/>
    </source>
</evidence>